<feature type="chain" id="PRO_0000268328" description="Bifunctional protein FolD">
    <location>
        <begin position="1"/>
        <end position="290"/>
    </location>
</feature>
<feature type="binding site" evidence="1">
    <location>
        <begin position="164"/>
        <end position="166"/>
    </location>
    <ligand>
        <name>NADP(+)</name>
        <dbReference type="ChEBI" id="CHEBI:58349"/>
    </ligand>
</feature>
<feature type="binding site" evidence="1">
    <location>
        <position position="193"/>
    </location>
    <ligand>
        <name>NADP(+)</name>
        <dbReference type="ChEBI" id="CHEBI:58349"/>
    </ligand>
</feature>
<feature type="binding site" evidence="1">
    <location>
        <position position="234"/>
    </location>
    <ligand>
        <name>NADP(+)</name>
        <dbReference type="ChEBI" id="CHEBI:58349"/>
    </ligand>
</feature>
<evidence type="ECO:0000255" key="1">
    <source>
        <dbReference type="HAMAP-Rule" id="MF_01576"/>
    </source>
</evidence>
<organism>
    <name type="scientific">Cytophaga hutchinsonii (strain ATCC 33406 / DSM 1761 / CIP 103989 / NBRC 15051 / NCIMB 9469 / D465)</name>
    <dbReference type="NCBI Taxonomy" id="269798"/>
    <lineage>
        <taxon>Bacteria</taxon>
        <taxon>Pseudomonadati</taxon>
        <taxon>Bacteroidota</taxon>
        <taxon>Cytophagia</taxon>
        <taxon>Cytophagales</taxon>
        <taxon>Cytophagaceae</taxon>
        <taxon>Cytophaga</taxon>
    </lineage>
</organism>
<gene>
    <name evidence="1" type="primary">folD</name>
    <name type="ordered locus">CHU_1716</name>
</gene>
<protein>
    <recommendedName>
        <fullName evidence="1">Bifunctional protein FolD</fullName>
    </recommendedName>
    <domain>
        <recommendedName>
            <fullName evidence="1">Methylenetetrahydrofolate dehydrogenase</fullName>
            <ecNumber evidence="1">1.5.1.5</ecNumber>
        </recommendedName>
    </domain>
    <domain>
        <recommendedName>
            <fullName evidence="1">Methenyltetrahydrofolate cyclohydrolase</fullName>
            <ecNumber evidence="1">3.5.4.9</ecNumber>
        </recommendedName>
    </domain>
</protein>
<comment type="function">
    <text evidence="1">Catalyzes the oxidation of 5,10-methylenetetrahydrofolate to 5,10-methenyltetrahydrofolate and then the hydrolysis of 5,10-methenyltetrahydrofolate to 10-formyltetrahydrofolate.</text>
</comment>
<comment type="catalytic activity">
    <reaction evidence="1">
        <text>(6R)-5,10-methylene-5,6,7,8-tetrahydrofolate + NADP(+) = (6R)-5,10-methenyltetrahydrofolate + NADPH</text>
        <dbReference type="Rhea" id="RHEA:22812"/>
        <dbReference type="ChEBI" id="CHEBI:15636"/>
        <dbReference type="ChEBI" id="CHEBI:57455"/>
        <dbReference type="ChEBI" id="CHEBI:57783"/>
        <dbReference type="ChEBI" id="CHEBI:58349"/>
        <dbReference type="EC" id="1.5.1.5"/>
    </reaction>
</comment>
<comment type="catalytic activity">
    <reaction evidence="1">
        <text>(6R)-5,10-methenyltetrahydrofolate + H2O = (6R)-10-formyltetrahydrofolate + H(+)</text>
        <dbReference type="Rhea" id="RHEA:23700"/>
        <dbReference type="ChEBI" id="CHEBI:15377"/>
        <dbReference type="ChEBI" id="CHEBI:15378"/>
        <dbReference type="ChEBI" id="CHEBI:57455"/>
        <dbReference type="ChEBI" id="CHEBI:195366"/>
        <dbReference type="EC" id="3.5.4.9"/>
    </reaction>
</comment>
<comment type="pathway">
    <text evidence="1">One-carbon metabolism; tetrahydrofolate interconversion.</text>
</comment>
<comment type="subunit">
    <text evidence="1">Homodimer.</text>
</comment>
<comment type="similarity">
    <text evidence="1">Belongs to the tetrahydrofolate dehydrogenase/cyclohydrolase family.</text>
</comment>
<proteinExistence type="inferred from homology"/>
<sequence length="290" mass="30995">MQLLDGKITSDQIKEELKTKVEAIKAKGGKIPHLAAVLVGDSGAAVTYVNAKVKACELVGFKSTLVKLPETITEADLLAKVAEINADKDIDGYIVQLPLPKHIDEQKVTEAISPDKDVDGFHPTSLGRMVLNLPTYLPATPYGIMQLLERNGIETSGKHCVVMGRSHIVGSPMSILMARNTNPGNATVTMVHSRTKNLKELTLQADILIVAIGKPEFVTADMVKEGAVVVDVGIHRIDDATKKSGFRLLGDVKFDEVAPKTSYISPVPGGVGPMTIASLLMNTLQAAALK</sequence>
<name>FOLD_CYTH3</name>
<dbReference type="EC" id="1.5.1.5" evidence="1"/>
<dbReference type="EC" id="3.5.4.9" evidence="1"/>
<dbReference type="EMBL" id="CP000383">
    <property type="protein sequence ID" value="ABG58983.1"/>
    <property type="molecule type" value="Genomic_DNA"/>
</dbReference>
<dbReference type="RefSeq" id="WP_011585100.1">
    <property type="nucleotide sequence ID" value="NC_008255.1"/>
</dbReference>
<dbReference type="SMR" id="Q11UD1"/>
<dbReference type="STRING" id="269798.CHU_1716"/>
<dbReference type="KEGG" id="chu:CHU_1716"/>
<dbReference type="eggNOG" id="COG0190">
    <property type="taxonomic scope" value="Bacteria"/>
</dbReference>
<dbReference type="HOGENOM" id="CLU_034045_2_1_10"/>
<dbReference type="OrthoDB" id="9803580at2"/>
<dbReference type="UniPathway" id="UPA00193"/>
<dbReference type="Proteomes" id="UP000001822">
    <property type="component" value="Chromosome"/>
</dbReference>
<dbReference type="GO" id="GO:0005829">
    <property type="term" value="C:cytosol"/>
    <property type="evidence" value="ECO:0007669"/>
    <property type="project" value="TreeGrafter"/>
</dbReference>
<dbReference type="GO" id="GO:0004477">
    <property type="term" value="F:methenyltetrahydrofolate cyclohydrolase activity"/>
    <property type="evidence" value="ECO:0007669"/>
    <property type="project" value="UniProtKB-UniRule"/>
</dbReference>
<dbReference type="GO" id="GO:0004488">
    <property type="term" value="F:methylenetetrahydrofolate dehydrogenase (NADP+) activity"/>
    <property type="evidence" value="ECO:0007669"/>
    <property type="project" value="UniProtKB-UniRule"/>
</dbReference>
<dbReference type="GO" id="GO:0000105">
    <property type="term" value="P:L-histidine biosynthetic process"/>
    <property type="evidence" value="ECO:0007669"/>
    <property type="project" value="UniProtKB-KW"/>
</dbReference>
<dbReference type="GO" id="GO:0009086">
    <property type="term" value="P:methionine biosynthetic process"/>
    <property type="evidence" value="ECO:0007669"/>
    <property type="project" value="UniProtKB-KW"/>
</dbReference>
<dbReference type="GO" id="GO:0006164">
    <property type="term" value="P:purine nucleotide biosynthetic process"/>
    <property type="evidence" value="ECO:0007669"/>
    <property type="project" value="UniProtKB-KW"/>
</dbReference>
<dbReference type="GO" id="GO:0035999">
    <property type="term" value="P:tetrahydrofolate interconversion"/>
    <property type="evidence" value="ECO:0007669"/>
    <property type="project" value="UniProtKB-UniRule"/>
</dbReference>
<dbReference type="CDD" id="cd01080">
    <property type="entry name" value="NAD_bind_m-THF_DH_Cyclohyd"/>
    <property type="match status" value="1"/>
</dbReference>
<dbReference type="FunFam" id="3.40.50.720:FF:000189">
    <property type="entry name" value="Bifunctional protein FolD"/>
    <property type="match status" value="1"/>
</dbReference>
<dbReference type="FunFam" id="3.40.50.10860:FF:000005">
    <property type="entry name" value="C-1-tetrahydrofolate synthase, cytoplasmic, putative"/>
    <property type="match status" value="1"/>
</dbReference>
<dbReference type="Gene3D" id="3.40.50.10860">
    <property type="entry name" value="Leucine Dehydrogenase, chain A, domain 1"/>
    <property type="match status" value="1"/>
</dbReference>
<dbReference type="Gene3D" id="3.40.50.720">
    <property type="entry name" value="NAD(P)-binding Rossmann-like Domain"/>
    <property type="match status" value="1"/>
</dbReference>
<dbReference type="HAMAP" id="MF_01576">
    <property type="entry name" value="THF_DHG_CYH"/>
    <property type="match status" value="1"/>
</dbReference>
<dbReference type="InterPro" id="IPR046346">
    <property type="entry name" value="Aminoacid_DH-like_N_sf"/>
</dbReference>
<dbReference type="InterPro" id="IPR036291">
    <property type="entry name" value="NAD(P)-bd_dom_sf"/>
</dbReference>
<dbReference type="InterPro" id="IPR000672">
    <property type="entry name" value="THF_DH/CycHdrlase"/>
</dbReference>
<dbReference type="InterPro" id="IPR020630">
    <property type="entry name" value="THF_DH/CycHdrlase_cat_dom"/>
</dbReference>
<dbReference type="InterPro" id="IPR020867">
    <property type="entry name" value="THF_DH/CycHdrlase_CS"/>
</dbReference>
<dbReference type="InterPro" id="IPR020631">
    <property type="entry name" value="THF_DH/CycHdrlase_NAD-bd_dom"/>
</dbReference>
<dbReference type="PANTHER" id="PTHR48099:SF5">
    <property type="entry name" value="C-1-TETRAHYDROFOLATE SYNTHASE, CYTOPLASMIC"/>
    <property type="match status" value="1"/>
</dbReference>
<dbReference type="PANTHER" id="PTHR48099">
    <property type="entry name" value="C-1-TETRAHYDROFOLATE SYNTHASE, CYTOPLASMIC-RELATED"/>
    <property type="match status" value="1"/>
</dbReference>
<dbReference type="Pfam" id="PF00763">
    <property type="entry name" value="THF_DHG_CYH"/>
    <property type="match status" value="1"/>
</dbReference>
<dbReference type="Pfam" id="PF02882">
    <property type="entry name" value="THF_DHG_CYH_C"/>
    <property type="match status" value="1"/>
</dbReference>
<dbReference type="PRINTS" id="PR00085">
    <property type="entry name" value="THFDHDRGNASE"/>
</dbReference>
<dbReference type="SUPFAM" id="SSF53223">
    <property type="entry name" value="Aminoacid dehydrogenase-like, N-terminal domain"/>
    <property type="match status" value="1"/>
</dbReference>
<dbReference type="SUPFAM" id="SSF51735">
    <property type="entry name" value="NAD(P)-binding Rossmann-fold domains"/>
    <property type="match status" value="1"/>
</dbReference>
<dbReference type="PROSITE" id="PS00767">
    <property type="entry name" value="THF_DHG_CYH_2"/>
    <property type="match status" value="1"/>
</dbReference>
<accession>Q11UD1</accession>
<reference key="1">
    <citation type="journal article" date="2007" name="Appl. Environ. Microbiol.">
        <title>Genome sequence of the cellulolytic gliding bacterium Cytophaga hutchinsonii.</title>
        <authorList>
            <person name="Xie G."/>
            <person name="Bruce D.C."/>
            <person name="Challacombe J.F."/>
            <person name="Chertkov O."/>
            <person name="Detter J.C."/>
            <person name="Gilna P."/>
            <person name="Han C.S."/>
            <person name="Lucas S."/>
            <person name="Misra M."/>
            <person name="Myers G.L."/>
            <person name="Richardson P."/>
            <person name="Tapia R."/>
            <person name="Thayer N."/>
            <person name="Thompson L.S."/>
            <person name="Brettin T.S."/>
            <person name="Henrissat B."/>
            <person name="Wilson D.B."/>
            <person name="McBride M.J."/>
        </authorList>
    </citation>
    <scope>NUCLEOTIDE SEQUENCE [LARGE SCALE GENOMIC DNA]</scope>
    <source>
        <strain>ATCC 33406 / DSM 1761 / JCM 20678 / CIP 103989 / IAM 12607 / NBRC 15051 / NCIMB 9469 / D465</strain>
    </source>
</reference>
<keyword id="KW-0028">Amino-acid biosynthesis</keyword>
<keyword id="KW-0368">Histidine biosynthesis</keyword>
<keyword id="KW-0378">Hydrolase</keyword>
<keyword id="KW-0486">Methionine biosynthesis</keyword>
<keyword id="KW-0511">Multifunctional enzyme</keyword>
<keyword id="KW-0521">NADP</keyword>
<keyword id="KW-0554">One-carbon metabolism</keyword>
<keyword id="KW-0560">Oxidoreductase</keyword>
<keyword id="KW-0658">Purine biosynthesis</keyword>
<keyword id="KW-1185">Reference proteome</keyword>